<evidence type="ECO:0000255" key="1">
    <source>
        <dbReference type="HAMAP-Rule" id="MF_00298"/>
    </source>
</evidence>
<accession>Q0I560</accession>
<proteinExistence type="inferred from homology"/>
<keyword id="KW-0378">Hydrolase</keyword>
<protein>
    <recommendedName>
        <fullName evidence="1">RNA pyrophosphohydrolase</fullName>
        <ecNumber evidence="1">3.6.1.-</ecNumber>
    </recommendedName>
    <alternativeName>
        <fullName evidence="1">(Di)nucleoside polyphosphate hydrolase</fullName>
    </alternativeName>
</protein>
<gene>
    <name evidence="1" type="primary">rppH</name>
    <name evidence="1" type="synonym">nudH</name>
    <name type="ordered locus">HS_1622</name>
</gene>
<sequence length="192" mass="23164">MIDFDGYRPNVGIVICNAERQVLWAKRYGQNSWQFPQGGINDNETAEQAMYRELYEEAGLTPKDVEILYVSKHWLRYKLPKRLLRHDNRPICIGQKQRWFLLQLVSDEKRINMQHTKSPEFDGWRWVSFWYPVRQVVTFKKDVYRKVMKEFALFLFDTNLKSRLSVPEEKKMFSSVKKKLIHKKNHKYSSNQ</sequence>
<organism>
    <name type="scientific">Histophilus somni (strain 129Pt)</name>
    <name type="common">Haemophilus somnus</name>
    <dbReference type="NCBI Taxonomy" id="205914"/>
    <lineage>
        <taxon>Bacteria</taxon>
        <taxon>Pseudomonadati</taxon>
        <taxon>Pseudomonadota</taxon>
        <taxon>Gammaproteobacteria</taxon>
        <taxon>Pasteurellales</taxon>
        <taxon>Pasteurellaceae</taxon>
        <taxon>Histophilus</taxon>
    </lineage>
</organism>
<reference key="1">
    <citation type="journal article" date="2007" name="J. Bacteriol.">
        <title>Complete genome sequence of Haemophilus somnus (Histophilus somni) strain 129Pt and comparison to Haemophilus ducreyi 35000HP and Haemophilus influenzae Rd.</title>
        <authorList>
            <person name="Challacombe J.F."/>
            <person name="Duncan A.J."/>
            <person name="Brettin T.S."/>
            <person name="Bruce D."/>
            <person name="Chertkov O."/>
            <person name="Detter J.C."/>
            <person name="Han C.S."/>
            <person name="Misra M."/>
            <person name="Richardson P."/>
            <person name="Tapia R."/>
            <person name="Thayer N."/>
            <person name="Xie G."/>
            <person name="Inzana T.J."/>
        </authorList>
    </citation>
    <scope>NUCLEOTIDE SEQUENCE [LARGE SCALE GENOMIC DNA]</scope>
    <source>
        <strain>129Pt</strain>
    </source>
</reference>
<name>RPPH_HISS1</name>
<dbReference type="EC" id="3.6.1.-" evidence="1"/>
<dbReference type="EMBL" id="CP000436">
    <property type="protein sequence ID" value="ABI25890.1"/>
    <property type="molecule type" value="Genomic_DNA"/>
</dbReference>
<dbReference type="SMR" id="Q0I560"/>
<dbReference type="KEGG" id="hso:HS_1622"/>
<dbReference type="eggNOG" id="COG0494">
    <property type="taxonomic scope" value="Bacteria"/>
</dbReference>
<dbReference type="HOGENOM" id="CLU_087195_3_2_6"/>
<dbReference type="GO" id="GO:0005737">
    <property type="term" value="C:cytoplasm"/>
    <property type="evidence" value="ECO:0007669"/>
    <property type="project" value="TreeGrafter"/>
</dbReference>
<dbReference type="GO" id="GO:0034353">
    <property type="term" value="F:mRNA 5'-diphosphatase activity"/>
    <property type="evidence" value="ECO:0007669"/>
    <property type="project" value="TreeGrafter"/>
</dbReference>
<dbReference type="GO" id="GO:0006402">
    <property type="term" value="P:mRNA catabolic process"/>
    <property type="evidence" value="ECO:0007669"/>
    <property type="project" value="TreeGrafter"/>
</dbReference>
<dbReference type="CDD" id="cd03671">
    <property type="entry name" value="NUDIX_Ap4A_hydrolase_plant_like"/>
    <property type="match status" value="1"/>
</dbReference>
<dbReference type="FunFam" id="3.90.79.10:FF:000001">
    <property type="entry name" value="RNA pyrophosphohydrolase"/>
    <property type="match status" value="1"/>
</dbReference>
<dbReference type="Gene3D" id="3.90.79.10">
    <property type="entry name" value="Nucleoside Triphosphate Pyrophosphohydrolase"/>
    <property type="match status" value="1"/>
</dbReference>
<dbReference type="HAMAP" id="MF_00298">
    <property type="entry name" value="Nudix_RppH"/>
    <property type="match status" value="1"/>
</dbReference>
<dbReference type="InterPro" id="IPR020476">
    <property type="entry name" value="Nudix_hydrolase"/>
</dbReference>
<dbReference type="InterPro" id="IPR015797">
    <property type="entry name" value="NUDIX_hydrolase-like_dom_sf"/>
</dbReference>
<dbReference type="InterPro" id="IPR020084">
    <property type="entry name" value="NUDIX_hydrolase_CS"/>
</dbReference>
<dbReference type="InterPro" id="IPR000086">
    <property type="entry name" value="NUDIX_hydrolase_dom"/>
</dbReference>
<dbReference type="InterPro" id="IPR022927">
    <property type="entry name" value="RppH"/>
</dbReference>
<dbReference type="NCBIfam" id="NF001934">
    <property type="entry name" value="PRK00714.1-1"/>
    <property type="match status" value="1"/>
</dbReference>
<dbReference type="NCBIfam" id="NF001937">
    <property type="entry name" value="PRK00714.1-4"/>
    <property type="match status" value="1"/>
</dbReference>
<dbReference type="NCBIfam" id="NF001938">
    <property type="entry name" value="PRK00714.1-5"/>
    <property type="match status" value="1"/>
</dbReference>
<dbReference type="PANTHER" id="PTHR23114">
    <property type="entry name" value="M7GPPPN-MRNA HYDROLASE"/>
    <property type="match status" value="1"/>
</dbReference>
<dbReference type="PANTHER" id="PTHR23114:SF17">
    <property type="entry name" value="M7GPPPN-MRNA HYDROLASE"/>
    <property type="match status" value="1"/>
</dbReference>
<dbReference type="Pfam" id="PF00293">
    <property type="entry name" value="NUDIX"/>
    <property type="match status" value="1"/>
</dbReference>
<dbReference type="PRINTS" id="PR00502">
    <property type="entry name" value="NUDIXFAMILY"/>
</dbReference>
<dbReference type="SUPFAM" id="SSF55811">
    <property type="entry name" value="Nudix"/>
    <property type="match status" value="1"/>
</dbReference>
<dbReference type="PROSITE" id="PS51462">
    <property type="entry name" value="NUDIX"/>
    <property type="match status" value="1"/>
</dbReference>
<dbReference type="PROSITE" id="PS00893">
    <property type="entry name" value="NUDIX_BOX"/>
    <property type="match status" value="1"/>
</dbReference>
<comment type="function">
    <text evidence="1">Accelerates the degradation of transcripts by removing pyrophosphate from the 5'-end of triphosphorylated RNA, leading to a more labile monophosphorylated state that can stimulate subsequent ribonuclease cleavage.</text>
</comment>
<comment type="cofactor">
    <cofactor evidence="1">
        <name>a divalent metal cation</name>
        <dbReference type="ChEBI" id="CHEBI:60240"/>
    </cofactor>
</comment>
<comment type="similarity">
    <text evidence="1">Belongs to the Nudix hydrolase family. RppH subfamily.</text>
</comment>
<feature type="chain" id="PRO_1000021951" description="RNA pyrophosphohydrolase">
    <location>
        <begin position="1"/>
        <end position="192"/>
    </location>
</feature>
<feature type="domain" description="Nudix hydrolase" evidence="1">
    <location>
        <begin position="6"/>
        <end position="149"/>
    </location>
</feature>
<feature type="short sequence motif" description="Nudix box">
    <location>
        <begin position="38"/>
        <end position="59"/>
    </location>
</feature>